<name>PRP46_EMENI</name>
<gene>
    <name type="primary">prp46</name>
    <name type="ORF">AN1208</name>
</gene>
<feature type="chain" id="PRO_0000051165" description="Pre-mRNA-splicing factor prp46">
    <location>
        <begin position="1"/>
        <end position="452"/>
    </location>
</feature>
<feature type="repeat" description="WD 1">
    <location>
        <begin position="141"/>
        <end position="180"/>
    </location>
</feature>
<feature type="repeat" description="WD 2">
    <location>
        <begin position="183"/>
        <end position="222"/>
    </location>
</feature>
<feature type="repeat" description="WD 3">
    <location>
        <begin position="225"/>
        <end position="264"/>
    </location>
</feature>
<feature type="repeat" description="WD 4">
    <location>
        <begin position="267"/>
        <end position="308"/>
    </location>
</feature>
<feature type="repeat" description="WD 5">
    <location>
        <begin position="310"/>
        <end position="349"/>
    </location>
</feature>
<feature type="repeat" description="WD 6">
    <location>
        <begin position="350"/>
        <end position="388"/>
    </location>
</feature>
<feature type="repeat" description="WD 7">
    <location>
        <begin position="399"/>
        <end position="438"/>
    </location>
</feature>
<feature type="region of interest" description="Disordered" evidence="2">
    <location>
        <begin position="61"/>
        <end position="129"/>
    </location>
</feature>
<feature type="region of interest" description="Disordered" evidence="2">
    <location>
        <begin position="432"/>
        <end position="452"/>
    </location>
</feature>
<feature type="compositionally biased region" description="Low complexity" evidence="2">
    <location>
        <begin position="61"/>
        <end position="70"/>
    </location>
</feature>
<feature type="compositionally biased region" description="Polar residues" evidence="2">
    <location>
        <begin position="114"/>
        <end position="125"/>
    </location>
</feature>
<evidence type="ECO:0000250" key="1"/>
<evidence type="ECO:0000256" key="2">
    <source>
        <dbReference type="SAM" id="MobiDB-lite"/>
    </source>
</evidence>
<evidence type="ECO:0000305" key="3"/>
<reference key="1">
    <citation type="journal article" date="2005" name="Nature">
        <title>Sequencing of Aspergillus nidulans and comparative analysis with A. fumigatus and A. oryzae.</title>
        <authorList>
            <person name="Galagan J.E."/>
            <person name="Calvo S.E."/>
            <person name="Cuomo C."/>
            <person name="Ma L.-J."/>
            <person name="Wortman J.R."/>
            <person name="Batzoglou S."/>
            <person name="Lee S.-I."/>
            <person name="Bastuerkmen M."/>
            <person name="Spevak C.C."/>
            <person name="Clutterbuck J."/>
            <person name="Kapitonov V."/>
            <person name="Jurka J."/>
            <person name="Scazzocchio C."/>
            <person name="Farman M.L."/>
            <person name="Butler J."/>
            <person name="Purcell S."/>
            <person name="Harris S."/>
            <person name="Braus G.H."/>
            <person name="Draht O."/>
            <person name="Busch S."/>
            <person name="D'Enfert C."/>
            <person name="Bouchier C."/>
            <person name="Goldman G.H."/>
            <person name="Bell-Pedersen D."/>
            <person name="Griffiths-Jones S."/>
            <person name="Doonan J.H."/>
            <person name="Yu J."/>
            <person name="Vienken K."/>
            <person name="Pain A."/>
            <person name="Freitag M."/>
            <person name="Selker E.U."/>
            <person name="Archer D.B."/>
            <person name="Penalva M.A."/>
            <person name="Oakley B.R."/>
            <person name="Momany M."/>
            <person name="Tanaka T."/>
            <person name="Kumagai T."/>
            <person name="Asai K."/>
            <person name="Machida M."/>
            <person name="Nierman W.C."/>
            <person name="Denning D.W."/>
            <person name="Caddick M.X."/>
            <person name="Hynes M."/>
            <person name="Paoletti M."/>
            <person name="Fischer R."/>
            <person name="Miller B.L."/>
            <person name="Dyer P.S."/>
            <person name="Sachs M.S."/>
            <person name="Osmani S.A."/>
            <person name="Birren B.W."/>
        </authorList>
    </citation>
    <scope>NUCLEOTIDE SEQUENCE [LARGE SCALE GENOMIC DNA]</scope>
    <source>
        <strain>FGSC A4 / ATCC 38163 / CBS 112.46 / NRRL 194 / M139</strain>
    </source>
</reference>
<reference key="2">
    <citation type="journal article" date="2009" name="Fungal Genet. Biol.">
        <title>The 2008 update of the Aspergillus nidulans genome annotation: a community effort.</title>
        <authorList>
            <person name="Wortman J.R."/>
            <person name="Gilsenan J.M."/>
            <person name="Joardar V."/>
            <person name="Deegan J."/>
            <person name="Clutterbuck J."/>
            <person name="Andersen M.R."/>
            <person name="Archer D."/>
            <person name="Bencina M."/>
            <person name="Braus G."/>
            <person name="Coutinho P."/>
            <person name="von Dohren H."/>
            <person name="Doonan J."/>
            <person name="Driessen A.J."/>
            <person name="Durek P."/>
            <person name="Espeso E."/>
            <person name="Fekete E."/>
            <person name="Flipphi M."/>
            <person name="Estrada C.G."/>
            <person name="Geysens S."/>
            <person name="Goldman G."/>
            <person name="de Groot P.W."/>
            <person name="Hansen K."/>
            <person name="Harris S.D."/>
            <person name="Heinekamp T."/>
            <person name="Helmstaedt K."/>
            <person name="Henrissat B."/>
            <person name="Hofmann G."/>
            <person name="Homan T."/>
            <person name="Horio T."/>
            <person name="Horiuchi H."/>
            <person name="James S."/>
            <person name="Jones M."/>
            <person name="Karaffa L."/>
            <person name="Karanyi Z."/>
            <person name="Kato M."/>
            <person name="Keller N."/>
            <person name="Kelly D.E."/>
            <person name="Kiel J.A."/>
            <person name="Kim J.M."/>
            <person name="van der Klei I.J."/>
            <person name="Klis F.M."/>
            <person name="Kovalchuk A."/>
            <person name="Krasevec N."/>
            <person name="Kubicek C.P."/>
            <person name="Liu B."/>
            <person name="Maccabe A."/>
            <person name="Meyer V."/>
            <person name="Mirabito P."/>
            <person name="Miskei M."/>
            <person name="Mos M."/>
            <person name="Mullins J."/>
            <person name="Nelson D.R."/>
            <person name="Nielsen J."/>
            <person name="Oakley B.R."/>
            <person name="Osmani S.A."/>
            <person name="Pakula T."/>
            <person name="Paszewski A."/>
            <person name="Paulsen I."/>
            <person name="Pilsyk S."/>
            <person name="Pocsi I."/>
            <person name="Punt P.J."/>
            <person name="Ram A.F."/>
            <person name="Ren Q."/>
            <person name="Robellet X."/>
            <person name="Robson G."/>
            <person name="Seiboth B."/>
            <person name="van Solingen P."/>
            <person name="Specht T."/>
            <person name="Sun J."/>
            <person name="Taheri-Talesh N."/>
            <person name="Takeshita N."/>
            <person name="Ussery D."/>
            <person name="vanKuyk P.A."/>
            <person name="Visser H."/>
            <person name="van de Vondervoort P.J."/>
            <person name="de Vries R.P."/>
            <person name="Walton J."/>
            <person name="Xiang X."/>
            <person name="Xiong Y."/>
            <person name="Zeng A.P."/>
            <person name="Brandt B.W."/>
            <person name="Cornell M.J."/>
            <person name="van den Hondel C.A."/>
            <person name="Visser J."/>
            <person name="Oliver S.G."/>
            <person name="Turner G."/>
        </authorList>
    </citation>
    <scope>GENOME REANNOTATION</scope>
    <source>
        <strain>FGSC A4 / ATCC 38163 / CBS 112.46 / NRRL 194 / M139</strain>
    </source>
</reference>
<organism>
    <name type="scientific">Emericella nidulans (strain FGSC A4 / ATCC 38163 / CBS 112.46 / NRRL 194 / M139)</name>
    <name type="common">Aspergillus nidulans</name>
    <dbReference type="NCBI Taxonomy" id="227321"/>
    <lineage>
        <taxon>Eukaryota</taxon>
        <taxon>Fungi</taxon>
        <taxon>Dikarya</taxon>
        <taxon>Ascomycota</taxon>
        <taxon>Pezizomycotina</taxon>
        <taxon>Eurotiomycetes</taxon>
        <taxon>Eurotiomycetidae</taxon>
        <taxon>Eurotiales</taxon>
        <taxon>Aspergillaceae</taxon>
        <taxon>Aspergillus</taxon>
        <taxon>Aspergillus subgen. Nidulantes</taxon>
    </lineage>
</organism>
<accession>Q5BE22</accession>
<accession>C8VST3</accession>
<protein>
    <recommendedName>
        <fullName>Pre-mRNA-splicing factor prp46</fullName>
    </recommendedName>
    <alternativeName>
        <fullName>Pre-mRNA-processing protein 46</fullName>
    </alternativeName>
</protein>
<sequence length="452" mass="49302">MDVIPSTTPGEAVRISAKRTAELFGPEYLMVTPSASNGSIGVSYRRKTEYEHVKELPPALAAKQAQAAAARSKRPKISSRSEGSGSGDKSGASTALVRRGGRASGAAGDDKPTSLIQRPSATRQQPPEWHAPWKLMRVISGHLGWVRSLAVEPNNEWFASGAGDRTIKIWNLATGALRLTLTGHISTVRGLAVSPRHPYLFSCGEDKMVKCWDLETNKVIRHYHGHLSGVYTLALHPRLDLLVTGGRDGVARVWDMRTRSNIHVLSGHTGTVADVQCQEADPQVITGSLDATVRLWDLAAGKTMGVLTHHKKGIRSLATHPREFTFASASTGSIKQWKCPGGEFMQNFEGHNAIINTLSVNEDNVLFSGGDNGSMSFWDWKTGYRYQTIDTTAQPGSLEAEAGIMTSTFDRTGLRLITGEADKTIKVWKQDDQATPETHPVTWAPTLGRQRY</sequence>
<keyword id="KW-0963">Cytoplasm</keyword>
<keyword id="KW-0507">mRNA processing</keyword>
<keyword id="KW-0508">mRNA splicing</keyword>
<keyword id="KW-0539">Nucleus</keyword>
<keyword id="KW-1185">Reference proteome</keyword>
<keyword id="KW-0677">Repeat</keyword>
<keyword id="KW-0747">Spliceosome</keyword>
<keyword id="KW-0853">WD repeat</keyword>
<dbReference type="EMBL" id="AACD01000017">
    <property type="protein sequence ID" value="EAA65801.1"/>
    <property type="molecule type" value="Genomic_DNA"/>
</dbReference>
<dbReference type="EMBL" id="BN001308">
    <property type="protein sequence ID" value="CBF87932.1"/>
    <property type="molecule type" value="Genomic_DNA"/>
</dbReference>
<dbReference type="RefSeq" id="XP_658812.1">
    <property type="nucleotide sequence ID" value="XM_653720.1"/>
</dbReference>
<dbReference type="SMR" id="Q5BE22"/>
<dbReference type="FunCoup" id="Q5BE22">
    <property type="interactions" value="944"/>
</dbReference>
<dbReference type="STRING" id="227321.Q5BE22"/>
<dbReference type="EnsemblFungi" id="CBF87932">
    <property type="protein sequence ID" value="CBF87932"/>
    <property type="gene ID" value="ANIA_01208"/>
</dbReference>
<dbReference type="KEGG" id="ani:ANIA_01208"/>
<dbReference type="VEuPathDB" id="FungiDB:AN1208"/>
<dbReference type="eggNOG" id="KOG0285">
    <property type="taxonomic scope" value="Eukaryota"/>
</dbReference>
<dbReference type="HOGENOM" id="CLU_000288_72_2_1"/>
<dbReference type="InParanoid" id="Q5BE22"/>
<dbReference type="OMA" id="FAMCFDQ"/>
<dbReference type="OrthoDB" id="10256122at2759"/>
<dbReference type="Proteomes" id="UP000000560">
    <property type="component" value="Chromosome VIII"/>
</dbReference>
<dbReference type="GO" id="GO:0071013">
    <property type="term" value="C:catalytic step 2 spliceosome"/>
    <property type="evidence" value="ECO:0000318"/>
    <property type="project" value="GO_Central"/>
</dbReference>
<dbReference type="GO" id="GO:0005737">
    <property type="term" value="C:cytoplasm"/>
    <property type="evidence" value="ECO:0007669"/>
    <property type="project" value="UniProtKB-SubCell"/>
</dbReference>
<dbReference type="GO" id="GO:0000974">
    <property type="term" value="C:Prp19 complex"/>
    <property type="evidence" value="ECO:0000318"/>
    <property type="project" value="GO_Central"/>
</dbReference>
<dbReference type="GO" id="GO:0000398">
    <property type="term" value="P:mRNA splicing, via spliceosome"/>
    <property type="evidence" value="ECO:0000318"/>
    <property type="project" value="GO_Central"/>
</dbReference>
<dbReference type="CDD" id="cd00200">
    <property type="entry name" value="WD40"/>
    <property type="match status" value="1"/>
</dbReference>
<dbReference type="FunFam" id="2.130.10.10:FF:000012">
    <property type="entry name" value="Putative pleiotropic regulator 1"/>
    <property type="match status" value="1"/>
</dbReference>
<dbReference type="Gene3D" id="2.130.10.10">
    <property type="entry name" value="YVTN repeat-like/Quinoprotein amine dehydrogenase"/>
    <property type="match status" value="1"/>
</dbReference>
<dbReference type="InterPro" id="IPR020472">
    <property type="entry name" value="G-protein_beta_WD-40_rep"/>
</dbReference>
<dbReference type="InterPro" id="IPR045241">
    <property type="entry name" value="Prp46/PLRG1-like"/>
</dbReference>
<dbReference type="InterPro" id="IPR015943">
    <property type="entry name" value="WD40/YVTN_repeat-like_dom_sf"/>
</dbReference>
<dbReference type="InterPro" id="IPR019775">
    <property type="entry name" value="WD40_repeat_CS"/>
</dbReference>
<dbReference type="InterPro" id="IPR036322">
    <property type="entry name" value="WD40_repeat_dom_sf"/>
</dbReference>
<dbReference type="InterPro" id="IPR001680">
    <property type="entry name" value="WD40_rpt"/>
</dbReference>
<dbReference type="PANTHER" id="PTHR19923:SF0">
    <property type="entry name" value="PLEIOTROPIC REGULATOR 1"/>
    <property type="match status" value="1"/>
</dbReference>
<dbReference type="PANTHER" id="PTHR19923">
    <property type="entry name" value="WD40 REPEAT PROTEINPRL1/PRL2-RELATED"/>
    <property type="match status" value="1"/>
</dbReference>
<dbReference type="Pfam" id="PF00400">
    <property type="entry name" value="WD40"/>
    <property type="match status" value="7"/>
</dbReference>
<dbReference type="PRINTS" id="PR00320">
    <property type="entry name" value="GPROTEINBRPT"/>
</dbReference>
<dbReference type="SMART" id="SM00320">
    <property type="entry name" value="WD40"/>
    <property type="match status" value="7"/>
</dbReference>
<dbReference type="SUPFAM" id="SSF50978">
    <property type="entry name" value="WD40 repeat-like"/>
    <property type="match status" value="1"/>
</dbReference>
<dbReference type="PROSITE" id="PS00678">
    <property type="entry name" value="WD_REPEATS_1"/>
    <property type="match status" value="2"/>
</dbReference>
<dbReference type="PROSITE" id="PS50082">
    <property type="entry name" value="WD_REPEATS_2"/>
    <property type="match status" value="5"/>
</dbReference>
<dbReference type="PROSITE" id="PS50294">
    <property type="entry name" value="WD_REPEATS_REGION"/>
    <property type="match status" value="1"/>
</dbReference>
<proteinExistence type="inferred from homology"/>
<comment type="function">
    <text evidence="1">Involved in pre-mRNA splicing and required for cell cycle progression at G2/M.</text>
</comment>
<comment type="subunit">
    <text evidence="1">Associated with the spliceosome.</text>
</comment>
<comment type="subcellular location">
    <subcellularLocation>
        <location evidence="1">Cytoplasm</location>
    </subcellularLocation>
    <subcellularLocation>
        <location evidence="1">Nucleus</location>
    </subcellularLocation>
</comment>
<comment type="similarity">
    <text evidence="3">Belongs to the WD repeat PRL1/PRL2 family.</text>
</comment>